<gene>
    <name type="primary">nifF</name>
    <name type="synonym">fldA</name>
    <name type="ordered locus">RCAP_rcc01421</name>
</gene>
<protein>
    <recommendedName>
        <fullName>Flavodoxin</fullName>
    </recommendedName>
</protein>
<accession>P52967</accession>
<accession>D5AT59</accession>
<proteinExistence type="evidence at protein level"/>
<evidence type="ECO:0000250" key="1"/>
<evidence type="ECO:0000255" key="2">
    <source>
        <dbReference type="PROSITE-ProRule" id="PRU00088"/>
    </source>
</evidence>
<evidence type="ECO:0000305" key="3"/>
<evidence type="ECO:0007829" key="4">
    <source>
        <dbReference type="PDB" id="2WC1"/>
    </source>
</evidence>
<reference key="1">
    <citation type="journal article" date="1996" name="J. Bacteriol.">
        <title>Cloning, characterization, and regulation of nifF from Rhodobacter capsulatus.</title>
        <authorList>
            <person name="Gennaro G."/>
            <person name="Huebner P."/>
            <person name="Sandmeier U."/>
            <person name="Yakunin A.F."/>
            <person name="Hallenbeck P.C."/>
        </authorList>
    </citation>
    <scope>NUCLEOTIDE SEQUENCE [GENOMIC DNA]</scope>
    <source>
        <strain>ATCC BAA-309 / NBRC 16581 / SB1003</strain>
    </source>
</reference>
<reference key="2">
    <citation type="journal article" date="2010" name="J. Bacteriol.">
        <title>Complete genome sequence of the photosynthetic purple nonsulfur bacterium Rhodobacter capsulatus SB 1003.</title>
        <authorList>
            <person name="Strnad H."/>
            <person name="Lapidus A."/>
            <person name="Paces J."/>
            <person name="Ulbrich P."/>
            <person name="Vlcek C."/>
            <person name="Paces V."/>
            <person name="Haselkorn R."/>
        </authorList>
    </citation>
    <scope>NUCLEOTIDE SEQUENCE [LARGE SCALE GENOMIC DNA]</scope>
    <source>
        <strain>ATCC BAA-309 / NBRC 16581 / SB1003</strain>
    </source>
</reference>
<feature type="initiator methionine" description="Removed" evidence="1">
    <location>
        <position position="1"/>
    </location>
</feature>
<feature type="chain" id="PRO_0000171641" description="Flavodoxin">
    <location>
        <begin position="2"/>
        <end position="182"/>
    </location>
</feature>
<feature type="domain" description="Flavodoxin-like" evidence="2">
    <location>
        <begin position="4"/>
        <end position="173"/>
    </location>
</feature>
<feature type="sequence conflict" description="In Ref. 1; AAC05792." evidence="3" ref="1">
    <original>KL</original>
    <variation>NV</variation>
    <location>
        <begin position="124"/>
        <end position="125"/>
    </location>
</feature>
<feature type="strand" evidence="4">
    <location>
        <begin position="3"/>
        <end position="8"/>
    </location>
</feature>
<feature type="strand" evidence="4">
    <location>
        <begin position="11"/>
        <end position="13"/>
    </location>
</feature>
<feature type="helix" evidence="4">
    <location>
        <begin position="14"/>
        <end position="23"/>
    </location>
</feature>
<feature type="turn" evidence="4">
    <location>
        <begin position="28"/>
        <end position="30"/>
    </location>
</feature>
<feature type="helix" evidence="4">
    <location>
        <begin position="37"/>
        <end position="39"/>
    </location>
</feature>
<feature type="helix" evidence="4">
    <location>
        <begin position="42"/>
        <end position="47"/>
    </location>
</feature>
<feature type="strand" evidence="4">
    <location>
        <begin position="49"/>
        <end position="56"/>
    </location>
</feature>
<feature type="turn" evidence="4">
    <location>
        <begin position="59"/>
        <end position="61"/>
    </location>
</feature>
<feature type="helix" evidence="4">
    <location>
        <begin position="66"/>
        <end position="68"/>
    </location>
</feature>
<feature type="helix" evidence="4">
    <location>
        <begin position="75"/>
        <end position="78"/>
    </location>
</feature>
<feature type="helix" evidence="4">
    <location>
        <begin position="79"/>
        <end position="82"/>
    </location>
</feature>
<feature type="strand" evidence="4">
    <location>
        <begin position="91"/>
        <end position="97"/>
    </location>
</feature>
<feature type="turn" evidence="4">
    <location>
        <begin position="100"/>
        <end position="102"/>
    </location>
</feature>
<feature type="turn" evidence="4">
    <location>
        <begin position="107"/>
        <end position="109"/>
    </location>
</feature>
<feature type="helix" evidence="4">
    <location>
        <begin position="110"/>
        <end position="119"/>
    </location>
</feature>
<feature type="turn" evidence="4">
    <location>
        <begin position="120"/>
        <end position="122"/>
    </location>
</feature>
<feature type="strand" evidence="4">
    <location>
        <begin position="124"/>
        <end position="126"/>
    </location>
</feature>
<feature type="strand" evidence="4">
    <location>
        <begin position="146"/>
        <end position="152"/>
    </location>
</feature>
<feature type="turn" evidence="4">
    <location>
        <begin position="154"/>
        <end position="156"/>
    </location>
</feature>
<feature type="helix" evidence="4">
    <location>
        <begin position="158"/>
        <end position="160"/>
    </location>
</feature>
<feature type="helix" evidence="4">
    <location>
        <begin position="161"/>
        <end position="171"/>
    </location>
</feature>
<feature type="helix" evidence="4">
    <location>
        <begin position="173"/>
        <end position="176"/>
    </location>
</feature>
<name>FLAV_RHOCB</name>
<comment type="function">
    <text>Low-potential electron donor to a number of redox enzymes. NifF is the electron donor to nitrogenase.</text>
</comment>
<comment type="cofactor">
    <cofactor>
        <name>FMN</name>
        <dbReference type="ChEBI" id="CHEBI:58210"/>
    </cofactor>
</comment>
<comment type="similarity">
    <text evidence="3">Belongs to the flavodoxin family.</text>
</comment>
<dbReference type="EMBL" id="L42290">
    <property type="protein sequence ID" value="AAC05792.1"/>
    <property type="molecule type" value="Genomic_DNA"/>
</dbReference>
<dbReference type="EMBL" id="CP001312">
    <property type="protein sequence ID" value="ADE85166.1"/>
    <property type="molecule type" value="Genomic_DNA"/>
</dbReference>
<dbReference type="RefSeq" id="WP_013067145.1">
    <property type="nucleotide sequence ID" value="NC_014034.1"/>
</dbReference>
<dbReference type="PDB" id="2WC1">
    <property type="method" value="X-ray"/>
    <property type="resolution" value="2.17 A"/>
    <property type="chains" value="A=1-182"/>
</dbReference>
<dbReference type="PDBsum" id="2WC1"/>
<dbReference type="SMR" id="P52967"/>
<dbReference type="STRING" id="272942.RCAP_rcc01421"/>
<dbReference type="GeneID" id="31490307"/>
<dbReference type="KEGG" id="rcp:RCAP_rcc01421"/>
<dbReference type="eggNOG" id="COG0716">
    <property type="taxonomic scope" value="Bacteria"/>
</dbReference>
<dbReference type="HOGENOM" id="CLU_051402_1_0_5"/>
<dbReference type="OrthoDB" id="359268at2"/>
<dbReference type="EvolutionaryTrace" id="P52967"/>
<dbReference type="Proteomes" id="UP000002361">
    <property type="component" value="Chromosome"/>
</dbReference>
<dbReference type="GO" id="GO:0009055">
    <property type="term" value="F:electron transfer activity"/>
    <property type="evidence" value="ECO:0007669"/>
    <property type="project" value="InterPro"/>
</dbReference>
<dbReference type="GO" id="GO:0010181">
    <property type="term" value="F:FMN binding"/>
    <property type="evidence" value="ECO:0007669"/>
    <property type="project" value="InterPro"/>
</dbReference>
<dbReference type="GO" id="GO:0009399">
    <property type="term" value="P:nitrogen fixation"/>
    <property type="evidence" value="ECO:0007669"/>
    <property type="project" value="UniProtKB-KW"/>
</dbReference>
<dbReference type="Gene3D" id="3.40.50.360">
    <property type="match status" value="1"/>
</dbReference>
<dbReference type="InterPro" id="IPR001094">
    <property type="entry name" value="Flavdoxin-like"/>
</dbReference>
<dbReference type="InterPro" id="IPR050619">
    <property type="entry name" value="Flavodoxin"/>
</dbReference>
<dbReference type="InterPro" id="IPR008254">
    <property type="entry name" value="Flavodoxin/NO_synth"/>
</dbReference>
<dbReference type="InterPro" id="IPR001226">
    <property type="entry name" value="Flavodoxin_CS"/>
</dbReference>
<dbReference type="InterPro" id="IPR010086">
    <property type="entry name" value="Flavodoxin_lc"/>
</dbReference>
<dbReference type="InterPro" id="IPR029039">
    <property type="entry name" value="Flavoprotein-like_sf"/>
</dbReference>
<dbReference type="NCBIfam" id="TIGR01752">
    <property type="entry name" value="flav_long"/>
    <property type="match status" value="1"/>
</dbReference>
<dbReference type="NCBIfam" id="NF006739">
    <property type="entry name" value="PRK09267.1-5"/>
    <property type="match status" value="1"/>
</dbReference>
<dbReference type="PANTHER" id="PTHR42809:SF1">
    <property type="entry name" value="FLAVODOXIN 1"/>
    <property type="match status" value="1"/>
</dbReference>
<dbReference type="PANTHER" id="PTHR42809">
    <property type="entry name" value="FLAVODOXIN 2"/>
    <property type="match status" value="1"/>
</dbReference>
<dbReference type="Pfam" id="PF00258">
    <property type="entry name" value="Flavodoxin_1"/>
    <property type="match status" value="1"/>
</dbReference>
<dbReference type="PIRSF" id="PIRSF038996">
    <property type="entry name" value="FldA"/>
    <property type="match status" value="1"/>
</dbReference>
<dbReference type="PRINTS" id="PR00369">
    <property type="entry name" value="FLAVODOXIN"/>
</dbReference>
<dbReference type="SUPFAM" id="SSF52218">
    <property type="entry name" value="Flavoproteins"/>
    <property type="match status" value="1"/>
</dbReference>
<dbReference type="PROSITE" id="PS00201">
    <property type="entry name" value="FLAVODOXIN"/>
    <property type="match status" value="1"/>
</dbReference>
<dbReference type="PROSITE" id="PS50902">
    <property type="entry name" value="FLAVODOXIN_LIKE"/>
    <property type="match status" value="1"/>
</dbReference>
<keyword id="KW-0002">3D-structure</keyword>
<keyword id="KW-0249">Electron transport</keyword>
<keyword id="KW-0285">Flavoprotein</keyword>
<keyword id="KW-0288">FMN</keyword>
<keyword id="KW-0535">Nitrogen fixation</keyword>
<keyword id="KW-1185">Reference proteome</keyword>
<keyword id="KW-0813">Transport</keyword>
<organism>
    <name type="scientific">Rhodobacter capsulatus (strain ATCC BAA-309 / NBRC 16581 / SB1003)</name>
    <dbReference type="NCBI Taxonomy" id="272942"/>
    <lineage>
        <taxon>Bacteria</taxon>
        <taxon>Pseudomonadati</taxon>
        <taxon>Pseudomonadota</taxon>
        <taxon>Alphaproteobacteria</taxon>
        <taxon>Rhodobacterales</taxon>
        <taxon>Rhodobacter group</taxon>
        <taxon>Rhodobacter</taxon>
    </lineage>
</organism>
<sequence>MAKIGLFFGSDTGTTRKIAKQIKDMFDDEVMAKPLNVNRADVADFMAYDFLILGTPTLGDGQLPGLSANAASESWEEFLPRIADQDFSGKTIALFGLGDQVTYPLEFVNALFFLHEFFSDRGAKLVGRWPAKGYGFEDSLAVVEGEFLGLALDQDNQAALTPERLKGWLSLIAADFGLVLPA</sequence>